<dbReference type="EC" id="3.1.26.5" evidence="1"/>
<dbReference type="EMBL" id="AJ248284">
    <property type="protein sequence ID" value="CAB49255.1"/>
    <property type="molecule type" value="Genomic_DNA"/>
</dbReference>
<dbReference type="EMBL" id="HE613800">
    <property type="protein sequence ID" value="CCE69710.1"/>
    <property type="molecule type" value="Genomic_DNA"/>
</dbReference>
<dbReference type="PIR" id="H75146">
    <property type="entry name" value="H75146"/>
</dbReference>
<dbReference type="RefSeq" id="WP_010867455.1">
    <property type="nucleotide sequence ID" value="NC_000868.1"/>
</dbReference>
<dbReference type="SMR" id="Q9V1U4"/>
<dbReference type="STRING" id="272844.PAB2126"/>
<dbReference type="KEGG" id="pab:PAB2126"/>
<dbReference type="PATRIC" id="fig|272844.11.peg.354"/>
<dbReference type="eggNOG" id="arCOG00784">
    <property type="taxonomic scope" value="Archaea"/>
</dbReference>
<dbReference type="HOGENOM" id="CLU_107020_1_0_2"/>
<dbReference type="OrthoDB" id="39019at2157"/>
<dbReference type="PhylomeDB" id="Q9V1U4"/>
<dbReference type="Proteomes" id="UP000000810">
    <property type="component" value="Chromosome"/>
</dbReference>
<dbReference type="Proteomes" id="UP000009139">
    <property type="component" value="Chromosome"/>
</dbReference>
<dbReference type="GO" id="GO:0005737">
    <property type="term" value="C:cytoplasm"/>
    <property type="evidence" value="ECO:0007669"/>
    <property type="project" value="UniProtKB-SubCell"/>
</dbReference>
<dbReference type="GO" id="GO:0030677">
    <property type="term" value="C:ribonuclease P complex"/>
    <property type="evidence" value="ECO:0007669"/>
    <property type="project" value="UniProtKB-UniRule"/>
</dbReference>
<dbReference type="GO" id="GO:0004526">
    <property type="term" value="F:ribonuclease P activity"/>
    <property type="evidence" value="ECO:0007669"/>
    <property type="project" value="UniProtKB-UniRule"/>
</dbReference>
<dbReference type="GO" id="GO:0003723">
    <property type="term" value="F:RNA binding"/>
    <property type="evidence" value="ECO:0007669"/>
    <property type="project" value="InterPro"/>
</dbReference>
<dbReference type="GO" id="GO:0001682">
    <property type="term" value="P:tRNA 5'-leader removal"/>
    <property type="evidence" value="ECO:0007669"/>
    <property type="project" value="UniProtKB-UniRule"/>
</dbReference>
<dbReference type="FunFam" id="2.30.30.210:FF:000015">
    <property type="entry name" value="Ribonuclease P protein component 1"/>
    <property type="match status" value="1"/>
</dbReference>
<dbReference type="Gene3D" id="2.30.30.210">
    <property type="entry name" value="Ribonuclease P/MRP, subunit p29"/>
    <property type="match status" value="1"/>
</dbReference>
<dbReference type="HAMAP" id="MF_00754">
    <property type="entry name" value="RNase_P_1"/>
    <property type="match status" value="1"/>
</dbReference>
<dbReference type="InterPro" id="IPR036980">
    <property type="entry name" value="RNase_P/MRP_Rpp29_sf"/>
</dbReference>
<dbReference type="InterPro" id="IPR023538">
    <property type="entry name" value="RNP1"/>
</dbReference>
<dbReference type="InterPro" id="IPR023534">
    <property type="entry name" value="Rof/RNase_P-like"/>
</dbReference>
<dbReference type="InterPro" id="IPR002730">
    <property type="entry name" value="Rpp29/RNP1"/>
</dbReference>
<dbReference type="NCBIfam" id="NF046110">
    <property type="entry name" value="RNaseP1Mthb"/>
    <property type="match status" value="1"/>
</dbReference>
<dbReference type="Pfam" id="PF01868">
    <property type="entry name" value="RNase_P-MRP_p29"/>
    <property type="match status" value="1"/>
</dbReference>
<dbReference type="SMART" id="SM00538">
    <property type="entry name" value="POP4"/>
    <property type="match status" value="1"/>
</dbReference>
<dbReference type="SUPFAM" id="SSF101744">
    <property type="entry name" value="Rof/RNase P subunit-like"/>
    <property type="match status" value="1"/>
</dbReference>
<gene>
    <name evidence="1" type="primary">rnp1</name>
    <name type="ordered locus">PYRAB03330</name>
    <name type="ORF">PAB2126</name>
</gene>
<comment type="function">
    <text evidence="1">Part of ribonuclease P, a protein complex that generates mature tRNA molecules by cleaving their 5'-ends.</text>
</comment>
<comment type="catalytic activity">
    <reaction evidence="1">
        <text>Endonucleolytic cleavage of RNA, removing 5'-extranucleotides from tRNA precursor.</text>
        <dbReference type="EC" id="3.1.26.5"/>
    </reaction>
</comment>
<comment type="subunit">
    <text evidence="1">Consists of a catalytic RNA component and at least 4-5 protein subunits.</text>
</comment>
<comment type="subcellular location">
    <subcellularLocation>
        <location evidence="1">Cytoplasm</location>
    </subcellularLocation>
</comment>
<comment type="similarity">
    <text evidence="1">Belongs to the eukaryotic/archaeal RNase P protein component 1 family.</text>
</comment>
<organism>
    <name type="scientific">Pyrococcus abyssi (strain GE5 / Orsay)</name>
    <dbReference type="NCBI Taxonomy" id="272844"/>
    <lineage>
        <taxon>Archaea</taxon>
        <taxon>Methanobacteriati</taxon>
        <taxon>Methanobacteriota</taxon>
        <taxon>Thermococci</taxon>
        <taxon>Thermococcales</taxon>
        <taxon>Thermococcaceae</taxon>
        <taxon>Pyrococcus</taxon>
    </lineage>
</organism>
<reference key="1">
    <citation type="journal article" date="2003" name="Mol. Microbiol.">
        <title>An integrated analysis of the genome of the hyperthermophilic archaeon Pyrococcus abyssi.</title>
        <authorList>
            <person name="Cohen G.N."/>
            <person name="Barbe V."/>
            <person name="Flament D."/>
            <person name="Galperin M."/>
            <person name="Heilig R."/>
            <person name="Lecompte O."/>
            <person name="Poch O."/>
            <person name="Prieur D."/>
            <person name="Querellou J."/>
            <person name="Ripp R."/>
            <person name="Thierry J.-C."/>
            <person name="Van der Oost J."/>
            <person name="Weissenbach J."/>
            <person name="Zivanovic Y."/>
            <person name="Forterre P."/>
        </authorList>
    </citation>
    <scope>NUCLEOTIDE SEQUENCE [LARGE SCALE GENOMIC DNA]</scope>
    <source>
        <strain>GE5 / Orsay</strain>
    </source>
</reference>
<reference key="2">
    <citation type="journal article" date="2012" name="Curr. Microbiol.">
        <title>Re-annotation of two hyperthermophilic archaea Pyrococcus abyssi GE5 and Pyrococcus furiosus DSM 3638.</title>
        <authorList>
            <person name="Gao J."/>
            <person name="Wang J."/>
        </authorList>
    </citation>
    <scope>GENOME REANNOTATION</scope>
    <source>
        <strain>GE5 / Orsay</strain>
    </source>
</reference>
<evidence type="ECO:0000255" key="1">
    <source>
        <dbReference type="HAMAP-Rule" id="MF_00754"/>
    </source>
</evidence>
<sequence>MRRNGKERKDRTSGGSQRPYQEIVGRTWIFRGSHRGRVTKRNIIWHELIGLKVRVVNSMHPGFVGIEGYVVDETRNMLVIVGDKVWKVPKDVCIFEFETEDGAKIKIPGERLVGRPEMRLKKRWRKW</sequence>
<proteinExistence type="inferred from homology"/>
<feature type="chain" id="PRO_0000128435" description="Ribonuclease P protein component 1">
    <location>
        <begin position="1"/>
        <end position="127"/>
    </location>
</feature>
<keyword id="KW-0963">Cytoplasm</keyword>
<keyword id="KW-0255">Endonuclease</keyword>
<keyword id="KW-0378">Hydrolase</keyword>
<keyword id="KW-0540">Nuclease</keyword>
<keyword id="KW-0819">tRNA processing</keyword>
<protein>
    <recommendedName>
        <fullName evidence="1">Ribonuclease P protein component 1</fullName>
        <shortName evidence="1">RNase P component 1</shortName>
        <ecNumber evidence="1">3.1.26.5</ecNumber>
    </recommendedName>
    <alternativeName>
        <fullName evidence="1">Rpp29</fullName>
    </alternativeName>
</protein>
<accession>Q9V1U4</accession>
<accession>G8ZHW7</accession>
<name>RNP1_PYRAB</name>